<feature type="chain" id="PRO_0000358205" description="NAD(P)H-quinone oxidoreductase subunit J">
    <location>
        <begin position="1"/>
        <end position="172"/>
    </location>
</feature>
<organism>
    <name type="scientific">Synechococcus sp. (strain ATCC 27144 / PCC 6301 / SAUG 1402/1)</name>
    <name type="common">Anacystis nidulans</name>
    <dbReference type="NCBI Taxonomy" id="269084"/>
    <lineage>
        <taxon>Bacteria</taxon>
        <taxon>Bacillati</taxon>
        <taxon>Cyanobacteriota</taxon>
        <taxon>Cyanophyceae</taxon>
        <taxon>Synechococcales</taxon>
        <taxon>Synechococcaceae</taxon>
        <taxon>Synechococcus</taxon>
    </lineage>
</organism>
<evidence type="ECO:0000255" key="1">
    <source>
        <dbReference type="HAMAP-Rule" id="MF_01357"/>
    </source>
</evidence>
<reference key="1">
    <citation type="journal article" date="2007" name="Photosyn. Res.">
        <title>Complete nucleotide sequence of the freshwater unicellular cyanobacterium Synechococcus elongatus PCC 6301 chromosome: gene content and organization.</title>
        <authorList>
            <person name="Sugita C."/>
            <person name="Ogata K."/>
            <person name="Shikata M."/>
            <person name="Jikuya H."/>
            <person name="Takano J."/>
            <person name="Furumichi M."/>
            <person name="Kanehisa M."/>
            <person name="Omata T."/>
            <person name="Sugiura M."/>
            <person name="Sugita M."/>
        </authorList>
    </citation>
    <scope>NUCLEOTIDE SEQUENCE [LARGE SCALE GENOMIC DNA]</scope>
    <source>
        <strain>ATCC 27144 / PCC 6301 / SAUG 1402/1</strain>
    </source>
</reference>
<sequence>MPEELTPTPETAVVEAGPVSRWLSENGFENTALERDHLGVEIVQVDREVLLPIAAALFAYGFNYLQCQGGYDLGPGQDLVSFYHLTKVSDDASQPQEVRVKVFLPRHDPKVPPVFWIWKGADWQERETFDMYGIQFEGHPNLKRILMPEDWVGWPLRKDYISPDFYELQDAY</sequence>
<dbReference type="EC" id="7.1.1.-" evidence="1"/>
<dbReference type="EMBL" id="AP008231">
    <property type="protein sequence ID" value="BAD78558.1"/>
    <property type="molecule type" value="Genomic_DNA"/>
</dbReference>
<dbReference type="RefSeq" id="WP_011242680.1">
    <property type="nucleotide sequence ID" value="NC_006576.1"/>
</dbReference>
<dbReference type="SMR" id="Q5N561"/>
<dbReference type="KEGG" id="syc:syc0368_c"/>
<dbReference type="eggNOG" id="COG0852">
    <property type="taxonomic scope" value="Bacteria"/>
</dbReference>
<dbReference type="Proteomes" id="UP000001175">
    <property type="component" value="Chromosome"/>
</dbReference>
<dbReference type="GO" id="GO:0031676">
    <property type="term" value="C:plasma membrane-derived thylakoid membrane"/>
    <property type="evidence" value="ECO:0007669"/>
    <property type="project" value="UniProtKB-SubCell"/>
</dbReference>
<dbReference type="GO" id="GO:0008137">
    <property type="term" value="F:NADH dehydrogenase (ubiquinone) activity"/>
    <property type="evidence" value="ECO:0007669"/>
    <property type="project" value="InterPro"/>
</dbReference>
<dbReference type="GO" id="GO:0048038">
    <property type="term" value="F:quinone binding"/>
    <property type="evidence" value="ECO:0007669"/>
    <property type="project" value="UniProtKB-KW"/>
</dbReference>
<dbReference type="GO" id="GO:0019684">
    <property type="term" value="P:photosynthesis, light reaction"/>
    <property type="evidence" value="ECO:0007669"/>
    <property type="project" value="UniProtKB-UniRule"/>
</dbReference>
<dbReference type="Gene3D" id="3.30.460.80">
    <property type="entry name" value="NADH:ubiquinone oxidoreductase, 30kDa subunit"/>
    <property type="match status" value="1"/>
</dbReference>
<dbReference type="HAMAP" id="MF_01357">
    <property type="entry name" value="NDH1_NuoC"/>
    <property type="match status" value="1"/>
</dbReference>
<dbReference type="InterPro" id="IPR010218">
    <property type="entry name" value="NADH_DH_suC"/>
</dbReference>
<dbReference type="InterPro" id="IPR037232">
    <property type="entry name" value="NADH_quin_OxRdtase_su_C/D-like"/>
</dbReference>
<dbReference type="InterPro" id="IPR001268">
    <property type="entry name" value="NADH_UbQ_OxRdtase_30kDa_su"/>
</dbReference>
<dbReference type="InterPro" id="IPR020396">
    <property type="entry name" value="NADH_UbQ_OxRdtase_CS"/>
</dbReference>
<dbReference type="NCBIfam" id="NF009141">
    <property type="entry name" value="PRK12494.1"/>
    <property type="match status" value="1"/>
</dbReference>
<dbReference type="PANTHER" id="PTHR10884:SF14">
    <property type="entry name" value="NADH DEHYDROGENASE [UBIQUINONE] IRON-SULFUR PROTEIN 3, MITOCHONDRIAL"/>
    <property type="match status" value="1"/>
</dbReference>
<dbReference type="PANTHER" id="PTHR10884">
    <property type="entry name" value="NADH DEHYDROGENASE UBIQUINONE IRON-SULFUR PROTEIN 3"/>
    <property type="match status" value="1"/>
</dbReference>
<dbReference type="Pfam" id="PF00329">
    <property type="entry name" value="Complex1_30kDa"/>
    <property type="match status" value="1"/>
</dbReference>
<dbReference type="SUPFAM" id="SSF143243">
    <property type="entry name" value="Nqo5-like"/>
    <property type="match status" value="1"/>
</dbReference>
<dbReference type="PROSITE" id="PS00542">
    <property type="entry name" value="COMPLEX1_30K"/>
    <property type="match status" value="1"/>
</dbReference>
<accession>Q5N561</accession>
<proteinExistence type="inferred from homology"/>
<keyword id="KW-0472">Membrane</keyword>
<keyword id="KW-0520">NAD</keyword>
<keyword id="KW-0521">NADP</keyword>
<keyword id="KW-0618">Plastoquinone</keyword>
<keyword id="KW-0874">Quinone</keyword>
<keyword id="KW-0793">Thylakoid</keyword>
<keyword id="KW-1278">Translocase</keyword>
<keyword id="KW-0813">Transport</keyword>
<name>NDHJ_SYNP6</name>
<protein>
    <recommendedName>
        <fullName evidence="1">NAD(P)H-quinone oxidoreductase subunit J</fullName>
        <ecNumber evidence="1">7.1.1.-</ecNumber>
    </recommendedName>
    <alternativeName>
        <fullName>NAD(P)H dehydrogenase subunit J</fullName>
    </alternativeName>
    <alternativeName>
        <fullName evidence="1">NADH-plastoquinone oxidoreductase subunit J</fullName>
    </alternativeName>
    <alternativeName>
        <fullName evidence="1">NDH-1 subunit J</fullName>
        <shortName evidence="1">NDH-J</shortName>
    </alternativeName>
</protein>
<gene>
    <name evidence="1" type="primary">ndhJ</name>
    <name type="ordered locus">syc0368_c</name>
</gene>
<comment type="function">
    <text evidence="1">NDH-1 shuttles electrons from an unknown electron donor, via FMN and iron-sulfur (Fe-S) centers, to quinones in the respiratory and/or the photosynthetic chain. The immediate electron acceptor for the enzyme in this species is believed to be plastoquinone. Couples the redox reaction to proton translocation, and thus conserves the redox energy in a proton gradient. Cyanobacterial NDH-1 also plays a role in inorganic carbon-concentration.</text>
</comment>
<comment type="catalytic activity">
    <reaction evidence="1">
        <text>a plastoquinone + NADH + (n+1) H(+)(in) = a plastoquinol + NAD(+) + n H(+)(out)</text>
        <dbReference type="Rhea" id="RHEA:42608"/>
        <dbReference type="Rhea" id="RHEA-COMP:9561"/>
        <dbReference type="Rhea" id="RHEA-COMP:9562"/>
        <dbReference type="ChEBI" id="CHEBI:15378"/>
        <dbReference type="ChEBI" id="CHEBI:17757"/>
        <dbReference type="ChEBI" id="CHEBI:57540"/>
        <dbReference type="ChEBI" id="CHEBI:57945"/>
        <dbReference type="ChEBI" id="CHEBI:62192"/>
    </reaction>
</comment>
<comment type="catalytic activity">
    <reaction evidence="1">
        <text>a plastoquinone + NADPH + (n+1) H(+)(in) = a plastoquinol + NADP(+) + n H(+)(out)</text>
        <dbReference type="Rhea" id="RHEA:42612"/>
        <dbReference type="Rhea" id="RHEA-COMP:9561"/>
        <dbReference type="Rhea" id="RHEA-COMP:9562"/>
        <dbReference type="ChEBI" id="CHEBI:15378"/>
        <dbReference type="ChEBI" id="CHEBI:17757"/>
        <dbReference type="ChEBI" id="CHEBI:57783"/>
        <dbReference type="ChEBI" id="CHEBI:58349"/>
        <dbReference type="ChEBI" id="CHEBI:62192"/>
    </reaction>
</comment>
<comment type="subunit">
    <text evidence="1">NDH-1 can be composed of about 15 different subunits; different subcomplexes with different compositions have been identified which probably have different functions.</text>
</comment>
<comment type="subcellular location">
    <subcellularLocation>
        <location evidence="1">Cellular thylakoid membrane</location>
        <topology evidence="1">Peripheral membrane protein</topology>
        <orientation evidence="1">Cytoplasmic side</orientation>
    </subcellularLocation>
</comment>
<comment type="similarity">
    <text evidence="1">Belongs to the complex I 30 kDa subunit family.</text>
</comment>